<organism>
    <name type="scientific">Aspergillus niger (strain ATCC MYA-4892 / CBS 513.88 / FGSC A1513)</name>
    <dbReference type="NCBI Taxonomy" id="425011"/>
    <lineage>
        <taxon>Eukaryota</taxon>
        <taxon>Fungi</taxon>
        <taxon>Dikarya</taxon>
        <taxon>Ascomycota</taxon>
        <taxon>Pezizomycotina</taxon>
        <taxon>Eurotiomycetes</taxon>
        <taxon>Eurotiomycetidae</taxon>
        <taxon>Eurotiales</taxon>
        <taxon>Aspergillaceae</taxon>
        <taxon>Aspergillus</taxon>
        <taxon>Aspergillus subgen. Circumdati</taxon>
    </lineage>
</organism>
<accession>A2QI77</accession>
<reference key="1">
    <citation type="journal article" date="2007" name="Nat. Biotechnol.">
        <title>Genome sequencing and analysis of the versatile cell factory Aspergillus niger CBS 513.88.</title>
        <authorList>
            <person name="Pel H.J."/>
            <person name="de Winde J.H."/>
            <person name="Archer D.B."/>
            <person name="Dyer P.S."/>
            <person name="Hofmann G."/>
            <person name="Schaap P.J."/>
            <person name="Turner G."/>
            <person name="de Vries R.P."/>
            <person name="Albang R."/>
            <person name="Albermann K."/>
            <person name="Andersen M.R."/>
            <person name="Bendtsen J.D."/>
            <person name="Benen J.A.E."/>
            <person name="van den Berg M."/>
            <person name="Breestraat S."/>
            <person name="Caddick M.X."/>
            <person name="Contreras R."/>
            <person name="Cornell M."/>
            <person name="Coutinho P.M."/>
            <person name="Danchin E.G.J."/>
            <person name="Debets A.J.M."/>
            <person name="Dekker P."/>
            <person name="van Dijck P.W.M."/>
            <person name="van Dijk A."/>
            <person name="Dijkhuizen L."/>
            <person name="Driessen A.J.M."/>
            <person name="d'Enfert C."/>
            <person name="Geysens S."/>
            <person name="Goosen C."/>
            <person name="Groot G.S.P."/>
            <person name="de Groot P.W.J."/>
            <person name="Guillemette T."/>
            <person name="Henrissat B."/>
            <person name="Herweijer M."/>
            <person name="van den Hombergh J.P.T.W."/>
            <person name="van den Hondel C.A.M.J.J."/>
            <person name="van der Heijden R.T.J.M."/>
            <person name="van der Kaaij R.M."/>
            <person name="Klis F.M."/>
            <person name="Kools H.J."/>
            <person name="Kubicek C.P."/>
            <person name="van Kuyk P.A."/>
            <person name="Lauber J."/>
            <person name="Lu X."/>
            <person name="van der Maarel M.J.E.C."/>
            <person name="Meulenberg R."/>
            <person name="Menke H."/>
            <person name="Mortimer M.A."/>
            <person name="Nielsen J."/>
            <person name="Oliver S.G."/>
            <person name="Olsthoorn M."/>
            <person name="Pal K."/>
            <person name="van Peij N.N.M.E."/>
            <person name="Ram A.F.J."/>
            <person name="Rinas U."/>
            <person name="Roubos J.A."/>
            <person name="Sagt C.M.J."/>
            <person name="Schmoll M."/>
            <person name="Sun J."/>
            <person name="Ussery D."/>
            <person name="Varga J."/>
            <person name="Vervecken W."/>
            <person name="van de Vondervoort P.J.J."/>
            <person name="Wedler H."/>
            <person name="Woesten H.A.B."/>
            <person name="Zeng A.-P."/>
            <person name="van Ooyen A.J.J."/>
            <person name="Visser J."/>
            <person name="Stam H."/>
        </authorList>
    </citation>
    <scope>NUCLEOTIDE SEQUENCE [LARGE SCALE GENOMIC DNA]</scope>
    <source>
        <strain>ATCC MYA-4892 / CBS 513.88 / FGSC A1513</strain>
    </source>
</reference>
<proteinExistence type="inferred from homology"/>
<comment type="function">
    <text evidence="1">Mitochondrial GTPase that catalyzes the GTP-dependent ribosomal translocation step during translation elongation. During this step, the ribosome changes from the pre-translocational (PRE) to the post-translocational (POST) state as the newly formed A-site-bound peptidyl-tRNA and P-site-bound deacylated tRNA move to the P and E sites, respectively. Catalyzes the coordinated movement of the two tRNA molecules, the mRNA and conformational changes in the ribosome.</text>
</comment>
<comment type="pathway">
    <text evidence="1">Protein biosynthesis; polypeptide chain elongation.</text>
</comment>
<comment type="subcellular location">
    <subcellularLocation>
        <location evidence="1">Mitochondrion</location>
    </subcellularLocation>
</comment>
<comment type="similarity">
    <text evidence="2">Belongs to the TRAFAC class translation factor GTPase superfamily. Classic translation factor GTPase family. EF-G/EF-2 subfamily.</text>
</comment>
<evidence type="ECO:0000255" key="1">
    <source>
        <dbReference type="HAMAP-Rule" id="MF_03061"/>
    </source>
</evidence>
<evidence type="ECO:0000305" key="2"/>
<name>EFGM_ASPNC</name>
<sequence length="801" mass="89037">MRTPTLARLPCRAVSGLTRSSARLQSQNFLTRRCASTAVLRSPTLAPAYQSALSKHFQQRRNASSTAAAVLEAAAANPDTLSQEAIIENLDPVEAARLSRVRNIGIAAHIDSGKTTCTERVLFYTGRIKAIHEVRGRDAVGAKMDSMDLEREKGITIQSAATFCDWVKKDAEGKEQKYHLNLIDTPGHIDFTIEVERALRVLDGAVMILCAVSGVQSQTITVDRQMRRYNVPRISFVNKMDRMGANPFKAVDQINKKLKIPAAAVQVPIGAEDEFEGVVDLLRMKAIYNRGPSGEELFETDEIPEKVKALAEERRQMLIETLADVDDEIAEIFLMEEVPTEDQIRQAIRRATINLKFTPVFMGSALANKSVQPMLDGVIDYLPNPSEVQNLALDKKRNEASVKLVPYNSLPMVGLAFKLEESNFGQLTYIRVYQGTLRKGSFVYNARNDKKVKIPRIVRMHSNEMEDVTEVGAGEICAVFGVECASGDTFTDGQLGYTMSSMFVPEPVISLSIKPKNNKDGANFSKAMARFQREDPTFRVTFDAESEQTLISGMGELHLEIYLERMRREYRVDCETGPPQVAYRETLGERVEFDHLLKKQSGGPGDYARVVGWMEPTGNLGENVFEEQIVGGSISEKFLFACEKGFHLSCDKGPLIGHKVLGTKMVINDGATHMTDSSEMAFKNATQQAFRKAFKESNPAVLEPIMKTVVTAPSEFQGDVIALLNKRNATINDSEVGVDEFTVYADCSLNGMFGISSHLRAATQGKGEYTMEFSHYERAPPHLQKDLIAKYQKAQADRHKK</sequence>
<keyword id="KW-0251">Elongation factor</keyword>
<keyword id="KW-0342">GTP-binding</keyword>
<keyword id="KW-0496">Mitochondrion</keyword>
<keyword id="KW-0547">Nucleotide-binding</keyword>
<keyword id="KW-0648">Protein biosynthesis</keyword>
<keyword id="KW-1185">Reference proteome</keyword>
<keyword id="KW-0809">Transit peptide</keyword>
<gene>
    <name type="primary">mef1</name>
    <name type="ORF">An04g02550</name>
</gene>
<dbReference type="EMBL" id="AM270071">
    <property type="protein sequence ID" value="CAL00742.1"/>
    <property type="molecule type" value="Genomic_DNA"/>
</dbReference>
<dbReference type="RefSeq" id="XP_001401623.1">
    <property type="nucleotide sequence ID" value="XM_001401586.2"/>
</dbReference>
<dbReference type="SMR" id="A2QI77"/>
<dbReference type="EnsemblFungi" id="CAL00742">
    <property type="protein sequence ID" value="CAL00742"/>
    <property type="gene ID" value="An04g02550"/>
</dbReference>
<dbReference type="GeneID" id="4990660"/>
<dbReference type="KEGG" id="ang:An04g02550"/>
<dbReference type="VEuPathDB" id="FungiDB:An04g02550"/>
<dbReference type="HOGENOM" id="CLU_002794_4_0_1"/>
<dbReference type="UniPathway" id="UPA00345"/>
<dbReference type="Proteomes" id="UP000006706">
    <property type="component" value="Chromosome 6L"/>
</dbReference>
<dbReference type="GO" id="GO:0005739">
    <property type="term" value="C:mitochondrion"/>
    <property type="evidence" value="ECO:0007669"/>
    <property type="project" value="UniProtKB-SubCell"/>
</dbReference>
<dbReference type="GO" id="GO:0005525">
    <property type="term" value="F:GTP binding"/>
    <property type="evidence" value="ECO:0007669"/>
    <property type="project" value="UniProtKB-UniRule"/>
</dbReference>
<dbReference type="GO" id="GO:0003924">
    <property type="term" value="F:GTPase activity"/>
    <property type="evidence" value="ECO:0007669"/>
    <property type="project" value="UniProtKB-UniRule"/>
</dbReference>
<dbReference type="GO" id="GO:0003746">
    <property type="term" value="F:translation elongation factor activity"/>
    <property type="evidence" value="ECO:0007669"/>
    <property type="project" value="UniProtKB-UniRule"/>
</dbReference>
<dbReference type="GO" id="GO:0070125">
    <property type="term" value="P:mitochondrial translational elongation"/>
    <property type="evidence" value="ECO:0007669"/>
    <property type="project" value="UniProtKB-UniRule"/>
</dbReference>
<dbReference type="CDD" id="cd01886">
    <property type="entry name" value="EF-G"/>
    <property type="match status" value="1"/>
</dbReference>
<dbReference type="CDD" id="cd16262">
    <property type="entry name" value="EFG_III"/>
    <property type="match status" value="1"/>
</dbReference>
<dbReference type="CDD" id="cd01434">
    <property type="entry name" value="EFG_mtEFG1_IV"/>
    <property type="match status" value="1"/>
</dbReference>
<dbReference type="CDD" id="cd04091">
    <property type="entry name" value="mtEFG1_II_like"/>
    <property type="match status" value="1"/>
</dbReference>
<dbReference type="FunFam" id="3.30.70.870:FF:000001">
    <property type="entry name" value="Elongation factor G"/>
    <property type="match status" value="1"/>
</dbReference>
<dbReference type="FunFam" id="2.40.30.10:FF:000022">
    <property type="entry name" value="Elongation factor G, mitochondrial"/>
    <property type="match status" value="1"/>
</dbReference>
<dbReference type="FunFam" id="3.30.70.240:FF:000015">
    <property type="entry name" value="Elongation factor G, mitochondrial"/>
    <property type="match status" value="1"/>
</dbReference>
<dbReference type="FunFam" id="3.40.50.300:FF:000558">
    <property type="entry name" value="Elongation factor G, mitochondrial"/>
    <property type="match status" value="1"/>
</dbReference>
<dbReference type="Gene3D" id="3.30.230.10">
    <property type="match status" value="1"/>
</dbReference>
<dbReference type="Gene3D" id="3.30.70.240">
    <property type="match status" value="1"/>
</dbReference>
<dbReference type="Gene3D" id="3.30.70.870">
    <property type="entry name" value="Elongation Factor G (Translational Gtpase), domain 3"/>
    <property type="match status" value="1"/>
</dbReference>
<dbReference type="Gene3D" id="3.40.50.300">
    <property type="entry name" value="P-loop containing nucleotide triphosphate hydrolases"/>
    <property type="match status" value="1"/>
</dbReference>
<dbReference type="Gene3D" id="2.40.30.10">
    <property type="entry name" value="Translation factors"/>
    <property type="match status" value="1"/>
</dbReference>
<dbReference type="HAMAP" id="MF_00054_B">
    <property type="entry name" value="EF_G_EF_2_B"/>
    <property type="match status" value="1"/>
</dbReference>
<dbReference type="InterPro" id="IPR041095">
    <property type="entry name" value="EFG_II"/>
</dbReference>
<dbReference type="InterPro" id="IPR009022">
    <property type="entry name" value="EFG_III"/>
</dbReference>
<dbReference type="InterPro" id="IPR035647">
    <property type="entry name" value="EFG_III/V"/>
</dbReference>
<dbReference type="InterPro" id="IPR047872">
    <property type="entry name" value="EFG_IV"/>
</dbReference>
<dbReference type="InterPro" id="IPR000640">
    <property type="entry name" value="EFG_V-like"/>
</dbReference>
<dbReference type="InterPro" id="IPR004161">
    <property type="entry name" value="EFTu-like_2"/>
</dbReference>
<dbReference type="InterPro" id="IPR031157">
    <property type="entry name" value="G_TR_CS"/>
</dbReference>
<dbReference type="InterPro" id="IPR027417">
    <property type="entry name" value="P-loop_NTPase"/>
</dbReference>
<dbReference type="InterPro" id="IPR020568">
    <property type="entry name" value="Ribosomal_Su5_D2-typ_SF"/>
</dbReference>
<dbReference type="InterPro" id="IPR014721">
    <property type="entry name" value="Ribsml_uS5_D2-typ_fold_subgr"/>
</dbReference>
<dbReference type="InterPro" id="IPR005225">
    <property type="entry name" value="Small_GTP-bd"/>
</dbReference>
<dbReference type="InterPro" id="IPR000795">
    <property type="entry name" value="T_Tr_GTP-bd_dom"/>
</dbReference>
<dbReference type="InterPro" id="IPR009000">
    <property type="entry name" value="Transl_B-barrel_sf"/>
</dbReference>
<dbReference type="InterPro" id="IPR004540">
    <property type="entry name" value="Transl_elong_EFG/EF2"/>
</dbReference>
<dbReference type="InterPro" id="IPR005517">
    <property type="entry name" value="Transl_elong_EFG/EF2_IV"/>
</dbReference>
<dbReference type="NCBIfam" id="TIGR00484">
    <property type="entry name" value="EF-G"/>
    <property type="match status" value="1"/>
</dbReference>
<dbReference type="NCBIfam" id="NF009381">
    <property type="entry name" value="PRK12740.1-5"/>
    <property type="match status" value="1"/>
</dbReference>
<dbReference type="NCBIfam" id="TIGR00231">
    <property type="entry name" value="small_GTP"/>
    <property type="match status" value="1"/>
</dbReference>
<dbReference type="PANTHER" id="PTHR43636">
    <property type="entry name" value="ELONGATION FACTOR G, MITOCHONDRIAL"/>
    <property type="match status" value="1"/>
</dbReference>
<dbReference type="PANTHER" id="PTHR43636:SF2">
    <property type="entry name" value="ELONGATION FACTOR G, MITOCHONDRIAL"/>
    <property type="match status" value="1"/>
</dbReference>
<dbReference type="Pfam" id="PF00679">
    <property type="entry name" value="EFG_C"/>
    <property type="match status" value="1"/>
</dbReference>
<dbReference type="Pfam" id="PF14492">
    <property type="entry name" value="EFG_III"/>
    <property type="match status" value="1"/>
</dbReference>
<dbReference type="Pfam" id="PF03764">
    <property type="entry name" value="EFG_IV"/>
    <property type="match status" value="1"/>
</dbReference>
<dbReference type="Pfam" id="PF00009">
    <property type="entry name" value="GTP_EFTU"/>
    <property type="match status" value="1"/>
</dbReference>
<dbReference type="Pfam" id="PF03144">
    <property type="entry name" value="GTP_EFTU_D2"/>
    <property type="match status" value="1"/>
</dbReference>
<dbReference type="PRINTS" id="PR00315">
    <property type="entry name" value="ELONGATNFCT"/>
</dbReference>
<dbReference type="SMART" id="SM00838">
    <property type="entry name" value="EFG_C"/>
    <property type="match status" value="1"/>
</dbReference>
<dbReference type="SMART" id="SM00889">
    <property type="entry name" value="EFG_IV"/>
    <property type="match status" value="1"/>
</dbReference>
<dbReference type="SUPFAM" id="SSF54980">
    <property type="entry name" value="EF-G C-terminal domain-like"/>
    <property type="match status" value="2"/>
</dbReference>
<dbReference type="SUPFAM" id="SSF52540">
    <property type="entry name" value="P-loop containing nucleoside triphosphate hydrolases"/>
    <property type="match status" value="1"/>
</dbReference>
<dbReference type="SUPFAM" id="SSF54211">
    <property type="entry name" value="Ribosomal protein S5 domain 2-like"/>
    <property type="match status" value="1"/>
</dbReference>
<dbReference type="SUPFAM" id="SSF50447">
    <property type="entry name" value="Translation proteins"/>
    <property type="match status" value="1"/>
</dbReference>
<dbReference type="PROSITE" id="PS00301">
    <property type="entry name" value="G_TR_1"/>
    <property type="match status" value="1"/>
</dbReference>
<dbReference type="PROSITE" id="PS51722">
    <property type="entry name" value="G_TR_2"/>
    <property type="match status" value="1"/>
</dbReference>
<protein>
    <recommendedName>
        <fullName evidence="1">Elongation factor G, mitochondrial</fullName>
        <shortName evidence="1">EF-Gmt</shortName>
    </recommendedName>
    <alternativeName>
        <fullName evidence="1">Elongation factor G 1, mitochondrial</fullName>
        <shortName evidence="1">mEF-G 1</shortName>
    </alternativeName>
    <alternativeName>
        <fullName evidence="1">Elongation factor G1</fullName>
    </alternativeName>
</protein>
<feature type="transit peptide" description="Mitochondrion" evidence="1">
    <location>
        <begin position="1"/>
        <end position="62"/>
    </location>
</feature>
<feature type="chain" id="PRO_0000385560" description="Elongation factor G, mitochondrial">
    <location>
        <begin position="63"/>
        <end position="801"/>
    </location>
</feature>
<feature type="domain" description="tr-type G">
    <location>
        <begin position="99"/>
        <end position="386"/>
    </location>
</feature>
<feature type="binding site" evidence="1">
    <location>
        <begin position="108"/>
        <end position="115"/>
    </location>
    <ligand>
        <name>GTP</name>
        <dbReference type="ChEBI" id="CHEBI:37565"/>
    </ligand>
</feature>
<feature type="binding site" evidence="1">
    <location>
        <begin position="184"/>
        <end position="188"/>
    </location>
    <ligand>
        <name>GTP</name>
        <dbReference type="ChEBI" id="CHEBI:37565"/>
    </ligand>
</feature>
<feature type="binding site" evidence="1">
    <location>
        <begin position="238"/>
        <end position="241"/>
    </location>
    <ligand>
        <name>GTP</name>
        <dbReference type="ChEBI" id="CHEBI:37565"/>
    </ligand>
</feature>